<feature type="chain" id="PRO_0000365623" description="ER membrane protein complex subunit 5" evidence="3">
    <location>
        <begin position="1"/>
        <end position="165"/>
    </location>
</feature>
<feature type="topological domain" description="Cytoplasmic" evidence="2">
    <location>
        <begin position="1"/>
        <end position="3"/>
    </location>
</feature>
<feature type="transmembrane region" description="Helical" evidence="2">
    <location>
        <begin position="4"/>
        <end position="22"/>
    </location>
</feature>
<feature type="topological domain" description="Lumenal" evidence="2">
    <location>
        <begin position="23"/>
        <end position="77"/>
    </location>
</feature>
<feature type="transmembrane region" description="Helical" evidence="2">
    <location>
        <begin position="78"/>
        <end position="97"/>
    </location>
</feature>
<feature type="topological domain" description="Cytoplasmic" evidence="2">
    <location>
        <begin position="98"/>
        <end position="165"/>
    </location>
</feature>
<feature type="modified residue" description="Phosphoserine" evidence="2">
    <location>
        <position position="154"/>
    </location>
</feature>
<proteinExistence type="evidence at transcript level"/>
<keyword id="KW-0256">Endoplasmic reticulum</keyword>
<keyword id="KW-0967">Endosome</keyword>
<keyword id="KW-0333">Golgi apparatus</keyword>
<keyword id="KW-0460">Magnesium</keyword>
<keyword id="KW-0472">Membrane</keyword>
<keyword id="KW-0597">Phosphoprotein</keyword>
<keyword id="KW-1185">Reference proteome</keyword>
<keyword id="KW-0812">Transmembrane</keyword>
<keyword id="KW-1133">Transmembrane helix</keyword>
<keyword id="KW-0813">Transport</keyword>
<accession>Q32LC4</accession>
<organism>
    <name type="scientific">Bos taurus</name>
    <name type="common">Bovine</name>
    <dbReference type="NCBI Taxonomy" id="9913"/>
    <lineage>
        <taxon>Eukaryota</taxon>
        <taxon>Metazoa</taxon>
        <taxon>Chordata</taxon>
        <taxon>Craniata</taxon>
        <taxon>Vertebrata</taxon>
        <taxon>Euteleostomi</taxon>
        <taxon>Mammalia</taxon>
        <taxon>Eutheria</taxon>
        <taxon>Laurasiatheria</taxon>
        <taxon>Artiodactyla</taxon>
        <taxon>Ruminantia</taxon>
        <taxon>Pecora</taxon>
        <taxon>Bovidae</taxon>
        <taxon>Bovinae</taxon>
        <taxon>Bos</taxon>
    </lineage>
</organism>
<comment type="function">
    <text evidence="1 2">Part of the endoplasmic reticulum membrane protein complex (EMC) that enables the energy-independent insertion into endoplasmic reticulum membranes of newly synthesized membrane proteins. Preferentially accommodates proteins with transmembrane domains that are weakly hydrophobic or contain destabilizing features such as charged and aromatic residues. Involved in the cotranslational insertion of multi-pass membrane proteins in which stop-transfer membrane-anchor sequences become ER membrane spanning helices. It is also required for the post-translational insertion of tail-anchored/TA proteins in endoplasmic reticulum membranes. By mediating the proper cotranslational insertion of N-terminal transmembrane domains in an N-exo topology, with translocated N-terminus in the lumen of the ER, controls the topology of multi-pass membrane proteins like the G protein-coupled receptors (By similarity). By regulating the insertion of various proteins in membranes, it is indirectly involved in many cellular processes. May be involved in Mg(2+) transport (By similarity).</text>
</comment>
<comment type="subunit">
    <text evidence="2">Component of the ER membrane protein complex (EMC).</text>
</comment>
<comment type="subcellular location">
    <subcellularLocation>
        <location evidence="2">Endoplasmic reticulum membrane</location>
        <topology evidence="2">Multi-pass membrane protein</topology>
    </subcellularLocation>
    <subcellularLocation>
        <location evidence="1">Golgi apparatus membrane</location>
        <topology evidence="2">Multi-pass membrane protein</topology>
    </subcellularLocation>
    <subcellularLocation>
        <location evidence="1">Early endosome membrane</location>
        <topology evidence="2">Multi-pass membrane protein</topology>
    </subcellularLocation>
</comment>
<comment type="similarity">
    <text evidence="4">Belongs to the membrane magnesium transporter (TC 1.A.67) family.</text>
</comment>
<sequence length="165" mass="18950">MAPSLWKGLVGIGLFALAHAAFSAAQHYFPSSGIKWKRKCEFLQSSSFQDKIFRSMYYVYDRSYMRLTEKEDESLPIDIVLQTLLAFAVTCYGIVHIAGEFKDMDATSELKNKTFDTLRNHPSFYVYNHRGRVLFRPSDTTNSSNQDALSSNTSLKLRKLESLRR</sequence>
<name>EMC5_BOVIN</name>
<protein>
    <recommendedName>
        <fullName evidence="2">ER membrane protein complex subunit 5</fullName>
    </recommendedName>
    <alternativeName>
        <fullName evidence="1">Membrane magnesium transporter 1</fullName>
    </alternativeName>
    <alternativeName>
        <fullName evidence="5">Transmembrane protein 32</fullName>
    </alternativeName>
</protein>
<gene>
    <name evidence="1" type="primary">MMGT1</name>
    <name evidence="2" type="synonym">EMC5</name>
    <name evidence="5" type="synonym">TMEM32</name>
</gene>
<dbReference type="EMBL" id="BC109649">
    <property type="protein sequence ID" value="AAI09650.1"/>
    <property type="molecule type" value="mRNA"/>
</dbReference>
<dbReference type="RefSeq" id="NP_001073098.1">
    <property type="nucleotide sequence ID" value="NM_001079630.1"/>
</dbReference>
<dbReference type="SMR" id="Q32LC4"/>
<dbReference type="FunCoup" id="Q32LC4">
    <property type="interactions" value="805"/>
</dbReference>
<dbReference type="STRING" id="9913.ENSBTAP00000035380"/>
<dbReference type="PaxDb" id="9913-ENSBTAP00000035380"/>
<dbReference type="GeneID" id="617557"/>
<dbReference type="KEGG" id="bta:617557"/>
<dbReference type="CTD" id="93380"/>
<dbReference type="eggNOG" id="KOG3918">
    <property type="taxonomic scope" value="Eukaryota"/>
</dbReference>
<dbReference type="InParanoid" id="Q32LC4"/>
<dbReference type="OrthoDB" id="44756at2759"/>
<dbReference type="Proteomes" id="UP000009136">
    <property type="component" value="Unplaced"/>
</dbReference>
<dbReference type="GO" id="GO:0005769">
    <property type="term" value="C:early endosome"/>
    <property type="evidence" value="ECO:0000318"/>
    <property type="project" value="GO_Central"/>
</dbReference>
<dbReference type="GO" id="GO:0031901">
    <property type="term" value="C:early endosome membrane"/>
    <property type="evidence" value="ECO:0007669"/>
    <property type="project" value="UniProtKB-SubCell"/>
</dbReference>
<dbReference type="GO" id="GO:0072546">
    <property type="term" value="C:EMC complex"/>
    <property type="evidence" value="ECO:0000250"/>
    <property type="project" value="UniProtKB"/>
</dbReference>
<dbReference type="GO" id="GO:0005789">
    <property type="term" value="C:endoplasmic reticulum membrane"/>
    <property type="evidence" value="ECO:0000250"/>
    <property type="project" value="UniProtKB"/>
</dbReference>
<dbReference type="GO" id="GO:0005794">
    <property type="term" value="C:Golgi apparatus"/>
    <property type="evidence" value="ECO:0000318"/>
    <property type="project" value="GO_Central"/>
</dbReference>
<dbReference type="GO" id="GO:0000139">
    <property type="term" value="C:Golgi membrane"/>
    <property type="evidence" value="ECO:0007669"/>
    <property type="project" value="UniProtKB-SubCell"/>
</dbReference>
<dbReference type="GO" id="GO:0016020">
    <property type="term" value="C:membrane"/>
    <property type="evidence" value="ECO:0000250"/>
    <property type="project" value="UniProtKB"/>
</dbReference>
<dbReference type="GO" id="GO:0005886">
    <property type="term" value="C:plasma membrane"/>
    <property type="evidence" value="ECO:0000318"/>
    <property type="project" value="GO_Central"/>
</dbReference>
<dbReference type="GO" id="GO:0022890">
    <property type="term" value="F:inorganic cation transmembrane transporter activity"/>
    <property type="evidence" value="ECO:0000318"/>
    <property type="project" value="GO_Central"/>
</dbReference>
<dbReference type="GO" id="GO:0045050">
    <property type="term" value="P:protein insertion into ER membrane by stop-transfer membrane-anchor sequence"/>
    <property type="evidence" value="ECO:0000250"/>
    <property type="project" value="UniProtKB"/>
</dbReference>
<dbReference type="GO" id="GO:0071816">
    <property type="term" value="P:tail-anchored membrane protein insertion into ER membrane"/>
    <property type="evidence" value="ECO:0000250"/>
    <property type="project" value="UniProtKB"/>
</dbReference>
<dbReference type="InterPro" id="IPR018937">
    <property type="entry name" value="MMgT"/>
</dbReference>
<dbReference type="PANTHER" id="PTHR21181">
    <property type="match status" value="1"/>
</dbReference>
<dbReference type="PANTHER" id="PTHR21181:SF7">
    <property type="entry name" value="ER MEMBRANE PROTEIN COMPLEX SUBUNIT 5"/>
    <property type="match status" value="1"/>
</dbReference>
<dbReference type="Pfam" id="PF10270">
    <property type="entry name" value="MMgT"/>
    <property type="match status" value="1"/>
</dbReference>
<evidence type="ECO:0000250" key="1">
    <source>
        <dbReference type="UniProtKB" id="Q8K273"/>
    </source>
</evidence>
<evidence type="ECO:0000250" key="2">
    <source>
        <dbReference type="UniProtKB" id="Q8N4V1"/>
    </source>
</evidence>
<evidence type="ECO:0000255" key="3"/>
<evidence type="ECO:0000305" key="4"/>
<evidence type="ECO:0000312" key="5">
    <source>
        <dbReference type="EMBL" id="AAI09650.1"/>
    </source>
</evidence>
<reference evidence="5" key="1">
    <citation type="submission" date="2005-11" db="EMBL/GenBank/DDBJ databases">
        <authorList>
            <consortium name="NIH - Mammalian Gene Collection (MGC) project"/>
        </authorList>
    </citation>
    <scope>NUCLEOTIDE SEQUENCE [LARGE SCALE MRNA]</scope>
    <source>
        <strain evidence="5">Crossbred X Angus</strain>
        <tissue evidence="5">Liver</tissue>
    </source>
</reference>